<accession>Q9YGW1</accession>
<protein>
    <recommendedName>
        <fullName>Hemoglobin subunit beta</fullName>
    </recommendedName>
    <alternativeName>
        <fullName>Beta-globin</fullName>
    </alternativeName>
    <alternativeName>
        <fullName>Hemoglobin beta chain</fullName>
    </alternativeName>
</protein>
<feature type="chain" id="PRO_0000053028" description="Hemoglobin subunit beta">
    <location>
        <begin position="1"/>
        <end position="137"/>
    </location>
</feature>
<feature type="domain" description="Globin" evidence="1">
    <location>
        <begin position="3"/>
        <end position="137"/>
    </location>
</feature>
<feature type="binding site" description="distal binding residue" evidence="2">
    <location>
        <position position="54"/>
    </location>
    <ligand>
        <name>heme b</name>
        <dbReference type="ChEBI" id="CHEBI:60344"/>
    </ligand>
    <ligandPart>
        <name>Fe</name>
        <dbReference type="ChEBI" id="CHEBI:18248"/>
    </ligandPart>
</feature>
<feature type="binding site" description="proximal binding residue" evidence="2 3 4">
    <location>
        <position position="83"/>
    </location>
    <ligand>
        <name>heme b</name>
        <dbReference type="ChEBI" id="CHEBI:60344"/>
    </ligand>
    <ligandPart>
        <name>Fe</name>
        <dbReference type="ChEBI" id="CHEBI:18248"/>
    </ligandPart>
</feature>
<feature type="helix" evidence="5">
    <location>
        <begin position="6"/>
        <end position="18"/>
    </location>
</feature>
<feature type="helix" evidence="5">
    <location>
        <begin position="21"/>
        <end position="35"/>
    </location>
</feature>
<feature type="helix" evidence="5">
    <location>
        <begin position="37"/>
        <end position="42"/>
    </location>
</feature>
<feature type="turn" evidence="5">
    <location>
        <begin position="43"/>
        <end position="45"/>
    </location>
</feature>
<feature type="helix" evidence="5">
    <location>
        <begin position="51"/>
        <end position="67"/>
    </location>
</feature>
<feature type="turn" evidence="5">
    <location>
        <begin position="68"/>
        <end position="70"/>
    </location>
</feature>
<feature type="helix" evidence="5">
    <location>
        <begin position="72"/>
        <end position="75"/>
    </location>
</feature>
<feature type="helix" evidence="5">
    <location>
        <begin position="77"/>
        <end position="85"/>
    </location>
</feature>
<feature type="helix" evidence="5">
    <location>
        <begin position="91"/>
        <end position="93"/>
    </location>
</feature>
<feature type="helix" evidence="5">
    <location>
        <begin position="94"/>
        <end position="109"/>
    </location>
</feature>
<feature type="helix" evidence="5">
    <location>
        <begin position="110"/>
        <end position="112"/>
    </location>
</feature>
<feature type="helix" evidence="5">
    <location>
        <begin position="115"/>
        <end position="133"/>
    </location>
</feature>
<comment type="function">
    <text>Involved in oxygen transport from gills to the various peripheral tissues.</text>
</comment>
<comment type="subunit">
    <text>Heterotetramer of two alpha chains and two beta chains.</text>
</comment>
<comment type="tissue specificity">
    <text>Red blood cells.</text>
</comment>
<comment type="similarity">
    <text evidence="1">Belongs to the globin family.</text>
</comment>
<organism>
    <name type="scientific">Mustelus griseus</name>
    <name type="common">Spotless smooth-hound</name>
    <dbReference type="NCBI Taxonomy" id="89020"/>
    <lineage>
        <taxon>Eukaryota</taxon>
        <taxon>Metazoa</taxon>
        <taxon>Chordata</taxon>
        <taxon>Craniata</taxon>
        <taxon>Vertebrata</taxon>
        <taxon>Chondrichthyes</taxon>
        <taxon>Elasmobranchii</taxon>
        <taxon>Galeomorphii</taxon>
        <taxon>Galeoidea</taxon>
        <taxon>Carcharhiniformes</taxon>
        <taxon>Triakidae</taxon>
        <taxon>Mustelus</taxon>
    </lineage>
</organism>
<evidence type="ECO:0000255" key="1">
    <source>
        <dbReference type="PROSITE-ProRule" id="PRU00238"/>
    </source>
</evidence>
<evidence type="ECO:0000269" key="2">
    <source>
    </source>
</evidence>
<evidence type="ECO:0007744" key="3">
    <source>
        <dbReference type="PDB" id="1GCV"/>
    </source>
</evidence>
<evidence type="ECO:0007744" key="4">
    <source>
        <dbReference type="PDB" id="1GCW"/>
    </source>
</evidence>
<evidence type="ECO:0007829" key="5">
    <source>
        <dbReference type="PDB" id="1GCV"/>
    </source>
</evidence>
<keyword id="KW-0002">3D-structure</keyword>
<keyword id="KW-0349">Heme</keyword>
<keyword id="KW-0408">Iron</keyword>
<keyword id="KW-0479">Metal-binding</keyword>
<keyword id="KW-0561">Oxygen transport</keyword>
<keyword id="KW-0813">Transport</keyword>
<sequence length="137" mass="16074">MVHWTQEERDEISKTFQGTDMKTVVTQALDRMFKVYPWTNRYFQKRTDFRSSIHAGIVVGALQDAVKHMDDVKTLFKDLSKKHADDLHVDPGSFHLLTDCIIVELAYLRKDCFTPHIQGIWDKFFEVVIDAISKQYH</sequence>
<gene>
    <name type="primary">HBB</name>
</gene>
<dbReference type="EMBL" id="AB023801">
    <property type="protein sequence ID" value="BAA75400.1"/>
    <property type="molecule type" value="mRNA"/>
</dbReference>
<dbReference type="PDB" id="1GCV">
    <property type="method" value="X-ray"/>
    <property type="resolution" value="2.00 A"/>
    <property type="chains" value="B/D=2-137"/>
</dbReference>
<dbReference type="PDB" id="1GCW">
    <property type="method" value="X-ray"/>
    <property type="resolution" value="2.00 A"/>
    <property type="chains" value="B/D=2-136"/>
</dbReference>
<dbReference type="PDBsum" id="1GCV"/>
<dbReference type="PDBsum" id="1GCW"/>
<dbReference type="SMR" id="Q9YGW1"/>
<dbReference type="EvolutionaryTrace" id="Q9YGW1"/>
<dbReference type="GO" id="GO:0072562">
    <property type="term" value="C:blood microparticle"/>
    <property type="evidence" value="ECO:0007669"/>
    <property type="project" value="TreeGrafter"/>
</dbReference>
<dbReference type="GO" id="GO:0031838">
    <property type="term" value="C:haptoglobin-hemoglobin complex"/>
    <property type="evidence" value="ECO:0007669"/>
    <property type="project" value="TreeGrafter"/>
</dbReference>
<dbReference type="GO" id="GO:0005833">
    <property type="term" value="C:hemoglobin complex"/>
    <property type="evidence" value="ECO:0007669"/>
    <property type="project" value="InterPro"/>
</dbReference>
<dbReference type="GO" id="GO:0031720">
    <property type="term" value="F:haptoglobin binding"/>
    <property type="evidence" value="ECO:0007669"/>
    <property type="project" value="TreeGrafter"/>
</dbReference>
<dbReference type="GO" id="GO:0020037">
    <property type="term" value="F:heme binding"/>
    <property type="evidence" value="ECO:0007669"/>
    <property type="project" value="InterPro"/>
</dbReference>
<dbReference type="GO" id="GO:0046872">
    <property type="term" value="F:metal ion binding"/>
    <property type="evidence" value="ECO:0007669"/>
    <property type="project" value="UniProtKB-KW"/>
</dbReference>
<dbReference type="GO" id="GO:0043177">
    <property type="term" value="F:organic acid binding"/>
    <property type="evidence" value="ECO:0007669"/>
    <property type="project" value="TreeGrafter"/>
</dbReference>
<dbReference type="GO" id="GO:0019825">
    <property type="term" value="F:oxygen binding"/>
    <property type="evidence" value="ECO:0007669"/>
    <property type="project" value="InterPro"/>
</dbReference>
<dbReference type="GO" id="GO:0005344">
    <property type="term" value="F:oxygen carrier activity"/>
    <property type="evidence" value="ECO:0007669"/>
    <property type="project" value="UniProtKB-KW"/>
</dbReference>
<dbReference type="GO" id="GO:0004601">
    <property type="term" value="F:peroxidase activity"/>
    <property type="evidence" value="ECO:0007669"/>
    <property type="project" value="TreeGrafter"/>
</dbReference>
<dbReference type="GO" id="GO:0042744">
    <property type="term" value="P:hydrogen peroxide catabolic process"/>
    <property type="evidence" value="ECO:0007669"/>
    <property type="project" value="TreeGrafter"/>
</dbReference>
<dbReference type="CDD" id="cd08925">
    <property type="entry name" value="Hb-beta-like"/>
    <property type="match status" value="1"/>
</dbReference>
<dbReference type="Gene3D" id="1.10.490.10">
    <property type="entry name" value="Globins"/>
    <property type="match status" value="1"/>
</dbReference>
<dbReference type="InterPro" id="IPR000971">
    <property type="entry name" value="Globin"/>
</dbReference>
<dbReference type="InterPro" id="IPR009050">
    <property type="entry name" value="Globin-like_sf"/>
</dbReference>
<dbReference type="InterPro" id="IPR012292">
    <property type="entry name" value="Globin/Proto"/>
</dbReference>
<dbReference type="InterPro" id="IPR002337">
    <property type="entry name" value="Hemoglobin_b"/>
</dbReference>
<dbReference type="InterPro" id="IPR050056">
    <property type="entry name" value="Hemoglobin_oxygen_transport"/>
</dbReference>
<dbReference type="PANTHER" id="PTHR11442">
    <property type="entry name" value="HEMOGLOBIN FAMILY MEMBER"/>
    <property type="match status" value="1"/>
</dbReference>
<dbReference type="PANTHER" id="PTHR11442:SF7">
    <property type="entry name" value="HEMOGLOBIN SUBUNIT EPSILON"/>
    <property type="match status" value="1"/>
</dbReference>
<dbReference type="Pfam" id="PF00042">
    <property type="entry name" value="Globin"/>
    <property type="match status" value="1"/>
</dbReference>
<dbReference type="SUPFAM" id="SSF46458">
    <property type="entry name" value="Globin-like"/>
    <property type="match status" value="1"/>
</dbReference>
<dbReference type="PROSITE" id="PS01033">
    <property type="entry name" value="GLOBIN"/>
    <property type="match status" value="1"/>
</dbReference>
<proteinExistence type="evidence at protein level"/>
<name>HBB_MUSGR</name>
<reference key="1">
    <citation type="submission" date="1999-02" db="EMBL/GenBank/DDBJ databases">
        <title>Hemoglobin beta chain of spotless smooth hound (Mustelus griseus).</title>
        <authorList>
            <person name="Miyazaki G."/>
            <person name="Yoshimatu K."/>
            <person name="Kawasaki Y."/>
            <person name="Suzuki T."/>
        </authorList>
    </citation>
    <scope>NUCLEOTIDE SEQUENCE [MRNA]</scope>
</reference>
<reference key="2">
    <citation type="journal article" date="2001" name="J. Mol. Biol.">
        <title>The functional similarity and structural diversity of human and cartilaginous fish hemoglobins.</title>
        <authorList>
            <person name="Naoi Y."/>
            <person name="Chong K.T."/>
            <person name="Yoshimatsu K."/>
            <person name="Miyazaki G."/>
            <person name="Tame J.R."/>
            <person name="Park S.Y."/>
            <person name="Adachi S."/>
            <person name="Morimoto H."/>
        </authorList>
    </citation>
    <scope>X-RAY CRYSTALLOGRAPHY (2.00 ANGSTROMS) OF 2-137 IN COMPLEX WITH HEME</scope>
    <scope>METAL BINDING AT HIS-54 AND HIS-83</scope>
</reference>